<accession>B4RZH3</accession>
<accession>F2G8B6</accession>
<gene>
    <name evidence="1" type="primary">obg</name>
    <name type="ordered locus">MADE_1003345</name>
</gene>
<reference key="1">
    <citation type="journal article" date="2008" name="ISME J.">
        <title>Comparative genomics of two ecotypes of the marine planktonic copiotroph Alteromonas macleodii suggests alternative lifestyles associated with different kinds of particulate organic matter.</title>
        <authorList>
            <person name="Ivars-Martinez E."/>
            <person name="Martin-Cuadrado A.-B."/>
            <person name="D'Auria G."/>
            <person name="Mira A."/>
            <person name="Ferriera S."/>
            <person name="Johnson J."/>
            <person name="Friedman R."/>
            <person name="Rodriguez-Valera F."/>
        </authorList>
    </citation>
    <scope>NUCLEOTIDE SEQUENCE [LARGE SCALE GENOMIC DNA]</scope>
    <source>
        <strain>DSM 17117 / CIP 110805 / LMG 28347 / Deep ecotype</strain>
    </source>
</reference>
<proteinExistence type="inferred from homology"/>
<dbReference type="EC" id="3.6.5.-" evidence="1"/>
<dbReference type="EMBL" id="CP001103">
    <property type="protein sequence ID" value="AEA96817.1"/>
    <property type="molecule type" value="Genomic_DNA"/>
</dbReference>
<dbReference type="RefSeq" id="WP_012517171.1">
    <property type="nucleotide sequence ID" value="NC_011138.3"/>
</dbReference>
<dbReference type="SMR" id="B4RZH3"/>
<dbReference type="KEGG" id="amc:MADE_1003345"/>
<dbReference type="HOGENOM" id="CLU_011747_2_0_6"/>
<dbReference type="Proteomes" id="UP000001870">
    <property type="component" value="Chromosome"/>
</dbReference>
<dbReference type="GO" id="GO:0005737">
    <property type="term" value="C:cytoplasm"/>
    <property type="evidence" value="ECO:0007669"/>
    <property type="project" value="UniProtKB-SubCell"/>
</dbReference>
<dbReference type="GO" id="GO:0005525">
    <property type="term" value="F:GTP binding"/>
    <property type="evidence" value="ECO:0007669"/>
    <property type="project" value="UniProtKB-UniRule"/>
</dbReference>
<dbReference type="GO" id="GO:0003924">
    <property type="term" value="F:GTPase activity"/>
    <property type="evidence" value="ECO:0007669"/>
    <property type="project" value="UniProtKB-UniRule"/>
</dbReference>
<dbReference type="GO" id="GO:0000287">
    <property type="term" value="F:magnesium ion binding"/>
    <property type="evidence" value="ECO:0007669"/>
    <property type="project" value="InterPro"/>
</dbReference>
<dbReference type="GO" id="GO:0042254">
    <property type="term" value="P:ribosome biogenesis"/>
    <property type="evidence" value="ECO:0007669"/>
    <property type="project" value="UniProtKB-UniRule"/>
</dbReference>
<dbReference type="CDD" id="cd01898">
    <property type="entry name" value="Obg"/>
    <property type="match status" value="1"/>
</dbReference>
<dbReference type="FunFam" id="2.70.210.12:FF:000001">
    <property type="entry name" value="GTPase Obg"/>
    <property type="match status" value="1"/>
</dbReference>
<dbReference type="FunFam" id="3.40.50.300:FF:000185">
    <property type="entry name" value="GTPase Obg"/>
    <property type="match status" value="1"/>
</dbReference>
<dbReference type="Gene3D" id="2.70.210.12">
    <property type="entry name" value="GTP1/OBG domain"/>
    <property type="match status" value="1"/>
</dbReference>
<dbReference type="Gene3D" id="3.40.50.300">
    <property type="entry name" value="P-loop containing nucleotide triphosphate hydrolases"/>
    <property type="match status" value="1"/>
</dbReference>
<dbReference type="HAMAP" id="MF_01454">
    <property type="entry name" value="GTPase_Obg"/>
    <property type="match status" value="1"/>
</dbReference>
<dbReference type="InterPro" id="IPR031167">
    <property type="entry name" value="G_OBG"/>
</dbReference>
<dbReference type="InterPro" id="IPR006073">
    <property type="entry name" value="GTP-bd"/>
</dbReference>
<dbReference type="InterPro" id="IPR014100">
    <property type="entry name" value="GTP-bd_Obg/CgtA"/>
</dbReference>
<dbReference type="InterPro" id="IPR006074">
    <property type="entry name" value="GTP1-OBG_CS"/>
</dbReference>
<dbReference type="InterPro" id="IPR006169">
    <property type="entry name" value="GTP1_OBG_dom"/>
</dbReference>
<dbReference type="InterPro" id="IPR036726">
    <property type="entry name" value="GTP1_OBG_dom_sf"/>
</dbReference>
<dbReference type="InterPro" id="IPR045086">
    <property type="entry name" value="OBG_GTPase"/>
</dbReference>
<dbReference type="InterPro" id="IPR027417">
    <property type="entry name" value="P-loop_NTPase"/>
</dbReference>
<dbReference type="NCBIfam" id="TIGR02729">
    <property type="entry name" value="Obg_CgtA"/>
    <property type="match status" value="1"/>
</dbReference>
<dbReference type="NCBIfam" id="NF008955">
    <property type="entry name" value="PRK12297.1"/>
    <property type="match status" value="1"/>
</dbReference>
<dbReference type="NCBIfam" id="NF008956">
    <property type="entry name" value="PRK12299.1"/>
    <property type="match status" value="1"/>
</dbReference>
<dbReference type="PANTHER" id="PTHR11702">
    <property type="entry name" value="DEVELOPMENTALLY REGULATED GTP-BINDING PROTEIN-RELATED"/>
    <property type="match status" value="1"/>
</dbReference>
<dbReference type="PANTHER" id="PTHR11702:SF31">
    <property type="entry name" value="MITOCHONDRIAL RIBOSOME-ASSOCIATED GTPASE 2"/>
    <property type="match status" value="1"/>
</dbReference>
<dbReference type="Pfam" id="PF01018">
    <property type="entry name" value="GTP1_OBG"/>
    <property type="match status" value="1"/>
</dbReference>
<dbReference type="Pfam" id="PF01926">
    <property type="entry name" value="MMR_HSR1"/>
    <property type="match status" value="1"/>
</dbReference>
<dbReference type="PIRSF" id="PIRSF002401">
    <property type="entry name" value="GTP_bd_Obg/CgtA"/>
    <property type="match status" value="1"/>
</dbReference>
<dbReference type="PRINTS" id="PR00326">
    <property type="entry name" value="GTP1OBG"/>
</dbReference>
<dbReference type="SUPFAM" id="SSF82051">
    <property type="entry name" value="Obg GTP-binding protein N-terminal domain"/>
    <property type="match status" value="1"/>
</dbReference>
<dbReference type="SUPFAM" id="SSF52540">
    <property type="entry name" value="P-loop containing nucleoside triphosphate hydrolases"/>
    <property type="match status" value="1"/>
</dbReference>
<dbReference type="PROSITE" id="PS51710">
    <property type="entry name" value="G_OBG"/>
    <property type="match status" value="1"/>
</dbReference>
<dbReference type="PROSITE" id="PS00905">
    <property type="entry name" value="GTP1_OBG"/>
    <property type="match status" value="1"/>
</dbReference>
<dbReference type="PROSITE" id="PS51883">
    <property type="entry name" value="OBG"/>
    <property type="match status" value="1"/>
</dbReference>
<organism>
    <name type="scientific">Alteromonas mediterranea (strain DSM 17117 / CIP 110805 / LMG 28347 / Deep ecotype)</name>
    <dbReference type="NCBI Taxonomy" id="1774373"/>
    <lineage>
        <taxon>Bacteria</taxon>
        <taxon>Pseudomonadati</taxon>
        <taxon>Pseudomonadota</taxon>
        <taxon>Gammaproteobacteria</taxon>
        <taxon>Alteromonadales</taxon>
        <taxon>Alteromonadaceae</taxon>
        <taxon>Alteromonas/Salinimonas group</taxon>
        <taxon>Alteromonas</taxon>
    </lineage>
</organism>
<keyword id="KW-0963">Cytoplasm</keyword>
<keyword id="KW-0342">GTP-binding</keyword>
<keyword id="KW-0378">Hydrolase</keyword>
<keyword id="KW-0460">Magnesium</keyword>
<keyword id="KW-0479">Metal-binding</keyword>
<keyword id="KW-0547">Nucleotide-binding</keyword>
<feature type="chain" id="PRO_0000385687" description="GTPase Obg">
    <location>
        <begin position="1"/>
        <end position="392"/>
    </location>
</feature>
<feature type="domain" description="Obg" evidence="2">
    <location>
        <begin position="1"/>
        <end position="159"/>
    </location>
</feature>
<feature type="domain" description="OBG-type G" evidence="1">
    <location>
        <begin position="160"/>
        <end position="333"/>
    </location>
</feature>
<feature type="region of interest" description="Disordered" evidence="3">
    <location>
        <begin position="121"/>
        <end position="146"/>
    </location>
</feature>
<feature type="compositionally biased region" description="Polar residues" evidence="3">
    <location>
        <begin position="129"/>
        <end position="145"/>
    </location>
</feature>
<feature type="binding site" evidence="1">
    <location>
        <begin position="166"/>
        <end position="173"/>
    </location>
    <ligand>
        <name>GTP</name>
        <dbReference type="ChEBI" id="CHEBI:37565"/>
    </ligand>
</feature>
<feature type="binding site" evidence="1">
    <location>
        <position position="173"/>
    </location>
    <ligand>
        <name>Mg(2+)</name>
        <dbReference type="ChEBI" id="CHEBI:18420"/>
    </ligand>
</feature>
<feature type="binding site" evidence="1">
    <location>
        <begin position="191"/>
        <end position="195"/>
    </location>
    <ligand>
        <name>GTP</name>
        <dbReference type="ChEBI" id="CHEBI:37565"/>
    </ligand>
</feature>
<feature type="binding site" evidence="1">
    <location>
        <position position="193"/>
    </location>
    <ligand>
        <name>Mg(2+)</name>
        <dbReference type="ChEBI" id="CHEBI:18420"/>
    </ligand>
</feature>
<feature type="binding site" evidence="1">
    <location>
        <begin position="213"/>
        <end position="216"/>
    </location>
    <ligand>
        <name>GTP</name>
        <dbReference type="ChEBI" id="CHEBI:37565"/>
    </ligand>
</feature>
<feature type="binding site" evidence="1">
    <location>
        <begin position="283"/>
        <end position="286"/>
    </location>
    <ligand>
        <name>GTP</name>
        <dbReference type="ChEBI" id="CHEBI:37565"/>
    </ligand>
</feature>
<feature type="binding site" evidence="1">
    <location>
        <begin position="314"/>
        <end position="316"/>
    </location>
    <ligand>
        <name>GTP</name>
        <dbReference type="ChEBI" id="CHEBI:37565"/>
    </ligand>
</feature>
<comment type="function">
    <text evidence="1">An essential GTPase which binds GTP, GDP and possibly (p)ppGpp with moderate affinity, with high nucleotide exchange rates and a fairly low GTP hydrolysis rate. Plays a role in control of the cell cycle, stress response, ribosome biogenesis and in those bacteria that undergo differentiation, in morphogenesis control.</text>
</comment>
<comment type="cofactor">
    <cofactor evidence="1">
        <name>Mg(2+)</name>
        <dbReference type="ChEBI" id="CHEBI:18420"/>
    </cofactor>
</comment>
<comment type="subunit">
    <text evidence="1">Monomer.</text>
</comment>
<comment type="subcellular location">
    <subcellularLocation>
        <location evidence="1">Cytoplasm</location>
    </subcellularLocation>
</comment>
<comment type="similarity">
    <text evidence="1">Belongs to the TRAFAC class OBG-HflX-like GTPase superfamily. OBG GTPase family.</text>
</comment>
<evidence type="ECO:0000255" key="1">
    <source>
        <dbReference type="HAMAP-Rule" id="MF_01454"/>
    </source>
</evidence>
<evidence type="ECO:0000255" key="2">
    <source>
        <dbReference type="PROSITE-ProRule" id="PRU01231"/>
    </source>
</evidence>
<evidence type="ECO:0000256" key="3">
    <source>
        <dbReference type="SAM" id="MobiDB-lite"/>
    </source>
</evidence>
<name>OBG_ALTMD</name>
<sequence>MKFVDEAEIRVEAGDGGNGVIGFRREKYVPKGGPDGGDGGDGGSVFLQADENLNTLIDYRFERFHRAERGQNGQGSNCIGKKGQDLTVMVPVGTRATDSDTGEVLGDLTRHGQKLKVAQGGFHGLGNTRFKSSTNRAPRQKTNGTPGEIRNLKLELMLLADVGLLGMPNAGKSTFIRSVSAAKPKVADYPFTTLVPNLGVVRQDAQRSFVVADIPGLIEGAADGAGLGIRFLKHLERCRILLHVVDIFPVDETDPADNAKAIIEELEKYSPKLAQKPRWLVFNKVDLLLEEEVEERCQHVIDALGWEGPVYQISAFQKMNLDPLCNDVMDFIETLPAETEQEEEKKEVEFKWDTYHKNTLEAHDEFEDDLGDDLDDDDWDEDDYDVEVEYRR</sequence>
<protein>
    <recommendedName>
        <fullName evidence="1">GTPase Obg</fullName>
        <ecNumber evidence="1">3.6.5.-</ecNumber>
    </recommendedName>
    <alternativeName>
        <fullName evidence="1">GTP-binding protein Obg</fullName>
    </alternativeName>
</protein>